<sequence>MSLIKKKNKNIRIIPLGGVGEIAKNMYIVEVDDEMFMLDAGLMFPEDEMLGVDIVIPDIQYVIENKEKLKGIFLTHGHEHAIGAVTYVLEQVDAPVYGSKLTIALIKENMKARNVNKKVRYYTVNNESVMRFKGVNVTFFNTTHSIPDSLGICIHTSYGAIVYTGEFKFDQSLHGHYAPDLKKMTEIGEAGVFALISDSTEAEKPGYNTPENVIESHMYDAFTKVKGRLIVSCYASNFIRIQQVLNLAQRLNRKVSFLGRSLESSFNIARKMGYFDISKDLLIPINEVENYPKNEVIIIATGMQGEPVEALSQMAQKKHKIMNIEPGDSVFLTITASANMEVIVGNTLNELVRAGAEIIPNSKKIHASSHGCMEELKMMINIMKPEYFIPVNGEFKMQISHAKLANEAGVQPEKIFLVEKGDVVNYDGEEMILNEKVNSGNVLIDGIGVGDVGNIVLRDRHLLAEDGIFIAVVTLDPKNRRIAAGPEIQSRGFVYVRESEALLNEAEEKVREIVELGLQEKRIEWSEIKQSMRDQISKLLFENTKRRPMIIPVISEI</sequence>
<comment type="function">
    <text evidence="1">An RNase that has 5'-3' exonuclease and possibly endoonuclease activity. Involved in maturation of rRNA and in some organisms also mRNA maturation and/or decay (By similarity).</text>
</comment>
<comment type="cofactor">
    <cofactor evidence="2">
        <name>Zn(2+)</name>
        <dbReference type="ChEBI" id="CHEBI:29105"/>
    </cofactor>
    <text evidence="2">Binds up to 2 Zn(2+) ions per subunit. It is not clear if Zn(2+) or Mg(2+) is physiologically important.</text>
</comment>
<comment type="subunit">
    <text evidence="2">Homodimer, may be a subunit of the RNA degradosome.</text>
</comment>
<comment type="subcellular location">
    <subcellularLocation>
        <location evidence="2">Cytoplasm</location>
    </subcellularLocation>
</comment>
<comment type="similarity">
    <text evidence="2">Belongs to the metallo-beta-lactamase superfamily. RNA-metabolizing metallo-beta-lactamase-like family. Bacterial RNase J subfamily.</text>
</comment>
<reference key="1">
    <citation type="journal article" date="2005" name="Proc. Natl. Acad. Sci. U.S.A.">
        <title>Whole genome sequence of Staphylococcus saprophyticus reveals the pathogenesis of uncomplicated urinary tract infection.</title>
        <authorList>
            <person name="Kuroda M."/>
            <person name="Yamashita A."/>
            <person name="Hirakawa H."/>
            <person name="Kumano M."/>
            <person name="Morikawa K."/>
            <person name="Higashide M."/>
            <person name="Maruyama A."/>
            <person name="Inose Y."/>
            <person name="Matoba K."/>
            <person name="Toh H."/>
            <person name="Kuhara S."/>
            <person name="Hattori M."/>
            <person name="Ohta T."/>
        </authorList>
    </citation>
    <scope>NUCLEOTIDE SEQUENCE [LARGE SCALE GENOMIC DNA]</scope>
    <source>
        <strain>ATCC 15305 / DSM 20229 / NCIMB 8711 / NCTC 7292 / S-41</strain>
    </source>
</reference>
<accession>Q49X63</accession>
<organism>
    <name type="scientific">Staphylococcus saprophyticus subsp. saprophyticus (strain ATCC 15305 / DSM 20229 / NCIMB 8711 / NCTC 7292 / S-41)</name>
    <dbReference type="NCBI Taxonomy" id="342451"/>
    <lineage>
        <taxon>Bacteria</taxon>
        <taxon>Bacillati</taxon>
        <taxon>Bacillota</taxon>
        <taxon>Bacilli</taxon>
        <taxon>Bacillales</taxon>
        <taxon>Staphylococcaceae</taxon>
        <taxon>Staphylococcus</taxon>
    </lineage>
</organism>
<gene>
    <name evidence="2" type="primary">rnj2</name>
    <name type="ordered locus">SSP1490</name>
</gene>
<dbReference type="EC" id="3.1.-.-" evidence="2"/>
<dbReference type="EMBL" id="AP008934">
    <property type="protein sequence ID" value="BAE18635.1"/>
    <property type="molecule type" value="Genomic_DNA"/>
</dbReference>
<dbReference type="SMR" id="Q49X63"/>
<dbReference type="GeneID" id="3617232"/>
<dbReference type="KEGG" id="ssp:SSP1490"/>
<dbReference type="PATRIC" id="fig|342451.11.peg.1493"/>
<dbReference type="eggNOG" id="COG0595">
    <property type="taxonomic scope" value="Bacteria"/>
</dbReference>
<dbReference type="HOGENOM" id="CLU_008727_3_1_9"/>
<dbReference type="OrthoDB" id="9758375at2"/>
<dbReference type="Proteomes" id="UP000006371">
    <property type="component" value="Chromosome"/>
</dbReference>
<dbReference type="GO" id="GO:0005737">
    <property type="term" value="C:cytoplasm"/>
    <property type="evidence" value="ECO:0007669"/>
    <property type="project" value="UniProtKB-SubCell"/>
</dbReference>
<dbReference type="GO" id="GO:0004534">
    <property type="term" value="F:5'-3' RNA exonuclease activity"/>
    <property type="evidence" value="ECO:0007669"/>
    <property type="project" value="UniProtKB-UniRule"/>
</dbReference>
<dbReference type="GO" id="GO:0003723">
    <property type="term" value="F:RNA binding"/>
    <property type="evidence" value="ECO:0007669"/>
    <property type="project" value="UniProtKB-UniRule"/>
</dbReference>
<dbReference type="GO" id="GO:0004521">
    <property type="term" value="F:RNA endonuclease activity"/>
    <property type="evidence" value="ECO:0007669"/>
    <property type="project" value="UniProtKB-UniRule"/>
</dbReference>
<dbReference type="GO" id="GO:0008270">
    <property type="term" value="F:zinc ion binding"/>
    <property type="evidence" value="ECO:0007669"/>
    <property type="project" value="InterPro"/>
</dbReference>
<dbReference type="GO" id="GO:0006364">
    <property type="term" value="P:rRNA processing"/>
    <property type="evidence" value="ECO:0007669"/>
    <property type="project" value="UniProtKB-UniRule"/>
</dbReference>
<dbReference type="CDD" id="cd07714">
    <property type="entry name" value="RNaseJ_MBL-fold"/>
    <property type="match status" value="1"/>
</dbReference>
<dbReference type="FunFam" id="3.10.20.580:FF:000001">
    <property type="entry name" value="Ribonuclease J"/>
    <property type="match status" value="1"/>
</dbReference>
<dbReference type="Gene3D" id="3.10.20.580">
    <property type="match status" value="1"/>
</dbReference>
<dbReference type="Gene3D" id="3.40.50.10710">
    <property type="entry name" value="Metallo-hydrolase/oxidoreductase"/>
    <property type="match status" value="1"/>
</dbReference>
<dbReference type="Gene3D" id="3.60.15.10">
    <property type="entry name" value="Ribonuclease Z/Hydroxyacylglutathione hydrolase-like"/>
    <property type="match status" value="1"/>
</dbReference>
<dbReference type="HAMAP" id="MF_01491">
    <property type="entry name" value="RNase_J_bact"/>
    <property type="match status" value="1"/>
</dbReference>
<dbReference type="InterPro" id="IPR001279">
    <property type="entry name" value="Metallo-B-lactamas"/>
</dbReference>
<dbReference type="InterPro" id="IPR036866">
    <property type="entry name" value="RibonucZ/Hydroxyglut_hydro"/>
</dbReference>
<dbReference type="InterPro" id="IPR011108">
    <property type="entry name" value="RMMBL"/>
</dbReference>
<dbReference type="InterPro" id="IPR004613">
    <property type="entry name" value="RNase_J"/>
</dbReference>
<dbReference type="InterPro" id="IPR042173">
    <property type="entry name" value="RNase_J_2"/>
</dbReference>
<dbReference type="InterPro" id="IPR055132">
    <property type="entry name" value="RNase_J_b_CASP"/>
</dbReference>
<dbReference type="InterPro" id="IPR030854">
    <property type="entry name" value="RNase_J_bac"/>
</dbReference>
<dbReference type="InterPro" id="IPR041636">
    <property type="entry name" value="RNase_J_C"/>
</dbReference>
<dbReference type="NCBIfam" id="TIGR00649">
    <property type="entry name" value="MG423"/>
    <property type="match status" value="1"/>
</dbReference>
<dbReference type="PANTHER" id="PTHR43694">
    <property type="entry name" value="RIBONUCLEASE J"/>
    <property type="match status" value="1"/>
</dbReference>
<dbReference type="PANTHER" id="PTHR43694:SF4">
    <property type="entry name" value="RIBONUCLEASE J 2"/>
    <property type="match status" value="1"/>
</dbReference>
<dbReference type="Pfam" id="PF00753">
    <property type="entry name" value="Lactamase_B"/>
    <property type="match status" value="1"/>
</dbReference>
<dbReference type="Pfam" id="PF07521">
    <property type="entry name" value="RMMBL"/>
    <property type="match status" value="1"/>
</dbReference>
<dbReference type="Pfam" id="PF22505">
    <property type="entry name" value="RNase_J_b_CASP"/>
    <property type="match status" value="1"/>
</dbReference>
<dbReference type="Pfam" id="PF17770">
    <property type="entry name" value="RNase_J_C"/>
    <property type="match status" value="1"/>
</dbReference>
<dbReference type="PIRSF" id="PIRSF004803">
    <property type="entry name" value="RnjA"/>
    <property type="match status" value="1"/>
</dbReference>
<dbReference type="SMART" id="SM00849">
    <property type="entry name" value="Lactamase_B"/>
    <property type="match status" value="1"/>
</dbReference>
<dbReference type="SUPFAM" id="SSF56281">
    <property type="entry name" value="Metallo-hydrolase/oxidoreductase"/>
    <property type="match status" value="1"/>
</dbReference>
<keyword id="KW-0963">Cytoplasm</keyword>
<keyword id="KW-0255">Endonuclease</keyword>
<keyword id="KW-0269">Exonuclease</keyword>
<keyword id="KW-0378">Hydrolase</keyword>
<keyword id="KW-0479">Metal-binding</keyword>
<keyword id="KW-0540">Nuclease</keyword>
<keyword id="KW-1185">Reference proteome</keyword>
<keyword id="KW-0694">RNA-binding</keyword>
<keyword id="KW-0698">rRNA processing</keyword>
<keyword id="KW-0862">Zinc</keyword>
<feature type="chain" id="PRO_0000286858" description="Ribonuclease J 2">
    <location>
        <begin position="1"/>
        <end position="557"/>
    </location>
</feature>
<feature type="binding site" evidence="2">
    <location>
        <position position="76"/>
    </location>
    <ligand>
        <name>Zn(2+)</name>
        <dbReference type="ChEBI" id="CHEBI:29105"/>
        <note>catalytic</note>
    </ligand>
</feature>
<feature type="binding site" evidence="2">
    <location>
        <position position="78"/>
    </location>
    <ligand>
        <name>Zn(2+)</name>
        <dbReference type="ChEBI" id="CHEBI:29105"/>
        <note>catalytic</note>
    </ligand>
</feature>
<feature type="binding site" evidence="2">
    <location>
        <position position="144"/>
    </location>
    <ligand>
        <name>Zn(2+)</name>
        <dbReference type="ChEBI" id="CHEBI:29105"/>
        <note>catalytic</note>
    </ligand>
</feature>
<feature type="binding site" evidence="2">
    <location>
        <position position="166"/>
    </location>
    <ligand>
        <name>Zn(2+)</name>
        <dbReference type="ChEBI" id="CHEBI:29105"/>
        <note>catalytic</note>
    </ligand>
</feature>
<feature type="binding site" evidence="2">
    <location>
        <begin position="366"/>
        <end position="370"/>
    </location>
    <ligand>
        <name>substrate</name>
    </ligand>
</feature>
<evidence type="ECO:0000250" key="1"/>
<evidence type="ECO:0000255" key="2">
    <source>
        <dbReference type="HAMAP-Rule" id="MF_01491"/>
    </source>
</evidence>
<name>RNJ2_STAS1</name>
<proteinExistence type="inferred from homology"/>
<protein>
    <recommendedName>
        <fullName evidence="2">Ribonuclease J 2</fullName>
        <shortName evidence="2">RNase J2</shortName>
        <ecNumber evidence="2">3.1.-.-</ecNumber>
    </recommendedName>
</protein>